<proteinExistence type="evidence at protein level"/>
<gene>
    <name evidence="4" type="primary">tatc6</name>
</gene>
<accession>A0A5S9I252</accession>
<feature type="chain" id="PRO_0000452513" description="Terpene cyclase 6">
    <location>
        <begin position="1"/>
        <end position="386"/>
    </location>
</feature>
<feature type="short sequence motif" description="D(D/E)XX(D/E) motif" evidence="2">
    <location>
        <begin position="128"/>
        <end position="132"/>
    </location>
</feature>
<feature type="short sequence motif" description="NSE motif" evidence="1">
    <location>
        <begin position="276"/>
        <end position="284"/>
    </location>
</feature>
<feature type="short sequence motif" description="WxxxxxRY motif" evidence="1">
    <location>
        <begin position="360"/>
        <end position="367"/>
    </location>
</feature>
<feature type="binding site" evidence="2">
    <location>
        <position position="128"/>
    </location>
    <ligand>
        <name>Mg(2+)</name>
        <dbReference type="ChEBI" id="CHEBI:18420"/>
        <label>1</label>
    </ligand>
</feature>
<feature type="binding site" evidence="2">
    <location>
        <position position="128"/>
    </location>
    <ligand>
        <name>Mg(2+)</name>
        <dbReference type="ChEBI" id="CHEBI:18420"/>
        <label>2</label>
    </ligand>
</feature>
<feature type="binding site" evidence="2">
    <location>
        <position position="276"/>
    </location>
    <ligand>
        <name>Mg(2+)</name>
        <dbReference type="ChEBI" id="CHEBI:18420"/>
        <label>3</label>
    </ligand>
</feature>
<feature type="binding site" evidence="2">
    <location>
        <position position="280"/>
    </location>
    <ligand>
        <name>Mg(2+)</name>
        <dbReference type="ChEBI" id="CHEBI:18420"/>
        <label>3</label>
    </ligand>
</feature>
<feature type="binding site" evidence="2">
    <location>
        <position position="366"/>
    </location>
    <ligand>
        <name>(2E,6E)-farnesyl diphosphate</name>
        <dbReference type="ChEBI" id="CHEBI:175763"/>
    </ligand>
</feature>
<feature type="binding site" evidence="2">
    <location>
        <position position="367"/>
    </location>
    <ligand>
        <name>(2E,6E)-farnesyl diphosphate</name>
        <dbReference type="ChEBI" id="CHEBI:175763"/>
    </ligand>
</feature>
<feature type="helix" evidence="6">
    <location>
        <begin position="32"/>
        <end position="43"/>
    </location>
</feature>
<feature type="strand" evidence="6">
    <location>
        <begin position="47"/>
        <end position="50"/>
    </location>
</feature>
<feature type="helix" evidence="6">
    <location>
        <begin position="53"/>
        <end position="56"/>
    </location>
</feature>
<feature type="helix" evidence="6">
    <location>
        <begin position="68"/>
        <end position="79"/>
    </location>
</feature>
<feature type="strand" evidence="7">
    <location>
        <begin position="82"/>
        <end position="84"/>
    </location>
</feature>
<feature type="helix" evidence="6">
    <location>
        <begin position="86"/>
        <end position="95"/>
    </location>
</feature>
<feature type="helix" evidence="6">
    <location>
        <begin position="98"/>
        <end position="105"/>
    </location>
</feature>
<feature type="helix" evidence="6">
    <location>
        <begin position="111"/>
        <end position="131"/>
    </location>
</feature>
<feature type="turn" evidence="6">
    <location>
        <begin position="136"/>
        <end position="139"/>
    </location>
</feature>
<feature type="helix" evidence="6">
    <location>
        <begin position="141"/>
        <end position="159"/>
    </location>
</feature>
<feature type="strand" evidence="6">
    <location>
        <begin position="160"/>
        <end position="162"/>
    </location>
</feature>
<feature type="helix" evidence="6">
    <location>
        <begin position="173"/>
        <end position="176"/>
    </location>
</feature>
<feature type="helix" evidence="6">
    <location>
        <begin position="178"/>
        <end position="186"/>
    </location>
</feature>
<feature type="helix" evidence="6">
    <location>
        <begin position="191"/>
        <end position="211"/>
    </location>
</feature>
<feature type="helix" evidence="6">
    <location>
        <begin position="223"/>
        <end position="233"/>
    </location>
</feature>
<feature type="helix" evidence="6">
    <location>
        <begin position="237"/>
        <end position="246"/>
    </location>
</feature>
<feature type="helix" evidence="6">
    <location>
        <begin position="253"/>
        <end position="256"/>
    </location>
</feature>
<feature type="helix" evidence="6">
    <location>
        <begin position="259"/>
        <end position="279"/>
    </location>
</feature>
<feature type="helix" evidence="6">
    <location>
        <begin position="281"/>
        <end position="286"/>
    </location>
</feature>
<feature type="helix" evidence="6">
    <location>
        <begin position="293"/>
        <end position="301"/>
    </location>
</feature>
<feature type="helix" evidence="6">
    <location>
        <begin position="305"/>
        <end position="327"/>
    </location>
</feature>
<feature type="helix" evidence="6">
    <location>
        <begin position="337"/>
        <end position="361"/>
    </location>
</feature>
<feature type="strand" evidence="6">
    <location>
        <begin position="364"/>
        <end position="368"/>
    </location>
</feature>
<feature type="helix" evidence="6">
    <location>
        <begin position="370"/>
        <end position="372"/>
    </location>
</feature>
<feature type="strand" evidence="6">
    <location>
        <begin position="379"/>
        <end position="382"/>
    </location>
</feature>
<reference key="1">
    <citation type="journal article" date="2019" name="Angew. Chem. Int. Ed.">
        <title>An unusual skeletal rearrangement in the biosynthesis of the sesquiterpene trichobrasilenol from Trichoderma.</title>
        <authorList>
            <person name="Murai K."/>
            <person name="Lauterbach L."/>
            <person name="Teramoto K."/>
            <person name="Quan Z."/>
            <person name="Barra L."/>
            <person name="Yamamoto T."/>
            <person name="Nonaka K."/>
            <person name="Shiomi K."/>
            <person name="Nishiyama M."/>
            <person name="Kuzuyama T."/>
            <person name="Dickschat J.S."/>
        </authorList>
    </citation>
    <scope>NUCLEOTIDE SEQUENCE [GENOMIC DNA]</scope>
    <scope>FUNCTION</scope>
    <scope>CATALYTIC ACTIVITY</scope>
    <scope>DISRUPTION PHENOTYPE</scope>
    <source>
        <strain>FKI-3849</strain>
    </source>
</reference>
<keyword id="KW-0002">3D-structure</keyword>
<keyword id="KW-0456">Lyase</keyword>
<keyword id="KW-0460">Magnesium</keyword>
<keyword id="KW-0479">Metal-binding</keyword>
<protein>
    <recommendedName>
        <fullName evidence="4">Terpene cyclase 6</fullName>
        <ecNumber evidence="3">4.2.3.-</ecNumber>
        <ecNumber evidence="3">4.2.3.104</ecNumber>
        <ecNumber evidence="3">4.2.3.137</ecNumber>
        <ecNumber evidence="3">4.2.3.157</ecNumber>
        <ecNumber evidence="3">4.2.3.182</ecNumber>
        <ecNumber evidence="3">4.2.3.57</ecNumber>
    </recommendedName>
    <alternativeName>
        <fullName evidence="4">Sesquiterpene synthase 6</fullName>
    </alternativeName>
</protein>
<sequence length="386" mass="44939">MGQPTTTSLFMRDVMFHRMTGTSQAVNDVATLSGERREIIRRALNKKILVPNILELMPAWPSEFQPNIDEVNVEIDEWLKTVNVAKEKKLKHRARGNYTLLAGIYYPHCRKEKMLALSQFLYWIFFWDDEIDTGGELTEDREGTILCCAETNKCINDCLGPEPNYTPPPGSRGTVEMLYPILRDLRAGLSPVSTMRLKQELHDYVNGVKNQQKVRQEDHLPNPWDHFQMRVDDVGVIPSITQNEYAMDFTLPDWIRRHEAMEEIVLQCTKLTILLNEILSLQKEFRVSQLENLCLLFMNTYDMSIEQSIHKVLGLLKDHYKICIEAEARLPWSTTDEKLNNNIREYIRGCQRLATGTACWSYNCERYFKLSQLNDQQELLLDLSRT</sequence>
<comment type="function">
    <text evidence="3">Terpene cyclase that is able to convert FPP into a mixture of sesquiterpene hydrocarbons and alcohols (PubMed:31418991). The main product is trichobrasilenol (PubMed:31418991). Additionally, side products include alpha-humulene, caryophyllene, 2-epi-caryophyllene, african-3-ene, african-1-ene, isoafricanol and pristinol (PubMed:31418991). Does not accept GPP, GGPP, and GFPP as substrates (PubMed:31418991).</text>
</comment>
<comment type="catalytic activity">
    <reaction evidence="3">
        <text>(2E,6E)-farnesyl diphosphate + H2O = trichobrasilenol + diphosphate</text>
        <dbReference type="Rhea" id="RHEA:66644"/>
        <dbReference type="ChEBI" id="CHEBI:15377"/>
        <dbReference type="ChEBI" id="CHEBI:33019"/>
        <dbReference type="ChEBI" id="CHEBI:167379"/>
        <dbReference type="ChEBI" id="CHEBI:175763"/>
    </reaction>
    <physiologicalReaction direction="left-to-right" evidence="3">
        <dbReference type="Rhea" id="RHEA:66645"/>
    </physiologicalReaction>
</comment>
<comment type="catalytic activity">
    <reaction evidence="3">
        <text>(2E,6E)-farnesyl diphosphate = alpha-humulene + diphosphate</text>
        <dbReference type="Rhea" id="RHEA:31895"/>
        <dbReference type="ChEBI" id="CHEBI:5768"/>
        <dbReference type="ChEBI" id="CHEBI:33019"/>
        <dbReference type="ChEBI" id="CHEBI:175763"/>
        <dbReference type="EC" id="4.2.3.104"/>
    </reaction>
    <physiologicalReaction direction="left-to-right" evidence="3">
        <dbReference type="Rhea" id="RHEA:31896"/>
    </physiologicalReaction>
</comment>
<comment type="catalytic activity">
    <reaction evidence="3">
        <text>(2E,6E)-farnesyl diphosphate = (-)-(E)-beta-caryophyllene + diphosphate</text>
        <dbReference type="Rhea" id="RHEA:28294"/>
        <dbReference type="ChEBI" id="CHEBI:10357"/>
        <dbReference type="ChEBI" id="CHEBI:33019"/>
        <dbReference type="ChEBI" id="CHEBI:175763"/>
        <dbReference type="EC" id="4.2.3.57"/>
    </reaction>
    <physiologicalReaction direction="left-to-right" evidence="3">
        <dbReference type="Rhea" id="RHEA:28295"/>
    </physiologicalReaction>
</comment>
<comment type="catalytic activity">
    <reaction evidence="3">
        <text>(2E,6E)-farnesyl diphosphate = (E)-2-epi-beta-caryophyllene + diphosphate</text>
        <dbReference type="Rhea" id="RHEA:34703"/>
        <dbReference type="ChEBI" id="CHEBI:33019"/>
        <dbReference type="ChEBI" id="CHEBI:68667"/>
        <dbReference type="ChEBI" id="CHEBI:175763"/>
        <dbReference type="EC" id="4.2.3.137"/>
    </reaction>
    <physiologicalReaction direction="left-to-right" evidence="3">
        <dbReference type="Rhea" id="RHEA:34704"/>
    </physiologicalReaction>
</comment>
<comment type="catalytic activity">
    <reaction evidence="3">
        <text>(2E,6E)-farnesyl diphosphate + H2O = (+)-isoafricanol + diphosphate</text>
        <dbReference type="Rhea" id="RHEA:53616"/>
        <dbReference type="ChEBI" id="CHEBI:15377"/>
        <dbReference type="ChEBI" id="CHEBI:33019"/>
        <dbReference type="ChEBI" id="CHEBI:137522"/>
        <dbReference type="ChEBI" id="CHEBI:175763"/>
        <dbReference type="EC" id="4.2.3.157"/>
    </reaction>
    <physiologicalReaction direction="left-to-right" evidence="3">
        <dbReference type="Rhea" id="RHEA:53617"/>
    </physiologicalReaction>
</comment>
<comment type="catalytic activity">
    <reaction evidence="3">
        <text>(2E,6E)-farnesyl diphosphate + H2O = (+)-(2S,3R,9R)-pristinol + diphosphate</text>
        <dbReference type="Rhea" id="RHEA:54372"/>
        <dbReference type="ChEBI" id="CHEBI:15377"/>
        <dbReference type="ChEBI" id="CHEBI:33019"/>
        <dbReference type="ChEBI" id="CHEBI:138165"/>
        <dbReference type="ChEBI" id="CHEBI:175763"/>
        <dbReference type="EC" id="4.2.3.182"/>
    </reaction>
    <physiologicalReaction direction="left-to-right" evidence="3">
        <dbReference type="Rhea" id="RHEA:54373"/>
    </physiologicalReaction>
</comment>
<comment type="catalytic activity">
    <reaction evidence="3">
        <text>(2E,6E)-farnesyl diphosphate = african-3-ene + diphosphate</text>
        <dbReference type="Rhea" id="RHEA:66648"/>
        <dbReference type="ChEBI" id="CHEBI:33019"/>
        <dbReference type="ChEBI" id="CHEBI:167380"/>
        <dbReference type="ChEBI" id="CHEBI:175763"/>
    </reaction>
    <physiologicalReaction direction="left-to-right" evidence="3">
        <dbReference type="Rhea" id="RHEA:66649"/>
    </physiologicalReaction>
</comment>
<comment type="catalytic activity">
    <reaction evidence="3">
        <text>(2E,6E)-farnesyl diphosphate = african-1-ene + diphosphate</text>
        <dbReference type="Rhea" id="RHEA:66652"/>
        <dbReference type="ChEBI" id="CHEBI:33019"/>
        <dbReference type="ChEBI" id="CHEBI:167381"/>
        <dbReference type="ChEBI" id="CHEBI:175763"/>
    </reaction>
    <physiologicalReaction direction="left-to-right" evidence="3">
        <dbReference type="Rhea" id="RHEA:66653"/>
    </physiologicalReaction>
</comment>
<comment type="cofactor">
    <cofactor evidence="2">
        <name>Mg(2+)</name>
        <dbReference type="ChEBI" id="CHEBI:18420"/>
    </cofactor>
    <text evidence="2">Binds 3 Mg(2+) ions per monomer.</text>
</comment>
<comment type="pathway">
    <text evidence="3">Sesquiterpene biosynthesis.</text>
</comment>
<comment type="subunit">
    <text evidence="2">Homodimer.</text>
</comment>
<comment type="domain">
    <text evidence="2">The 2 conserved active-site motifs D(D/E)XX(D/E) and NSE are required for coordinating the divalent metal ions that stabilize the PPi moiety of the substrate.</text>
</comment>
<comment type="domain">
    <text evidence="1">The C-terminal WxxxxxRY motif is frequently found in terpene synthases and is important to guide product formation.</text>
</comment>
<comment type="disruption phenotype">
    <text evidence="3">Abolishes the production of koraiol.</text>
</comment>
<comment type="similarity">
    <text evidence="5">Belongs to the terpene synthase family.</text>
</comment>
<evidence type="ECO:0000250" key="1">
    <source>
        <dbReference type="UniProtKB" id="P9WEY7"/>
    </source>
</evidence>
<evidence type="ECO:0000250" key="2">
    <source>
        <dbReference type="UniProtKB" id="Q9UR08"/>
    </source>
</evidence>
<evidence type="ECO:0000269" key="3">
    <source>
    </source>
</evidence>
<evidence type="ECO:0000303" key="4">
    <source>
    </source>
</evidence>
<evidence type="ECO:0000305" key="5"/>
<evidence type="ECO:0007829" key="6">
    <source>
        <dbReference type="PDB" id="7W5G"/>
    </source>
</evidence>
<evidence type="ECO:0007829" key="7">
    <source>
        <dbReference type="PDB" id="7W5H"/>
    </source>
</evidence>
<dbReference type="EC" id="4.2.3.-" evidence="3"/>
<dbReference type="EC" id="4.2.3.104" evidence="3"/>
<dbReference type="EC" id="4.2.3.137" evidence="3"/>
<dbReference type="EC" id="4.2.3.157" evidence="3"/>
<dbReference type="EC" id="4.2.3.182" evidence="3"/>
<dbReference type="EC" id="4.2.3.57" evidence="3"/>
<dbReference type="EMBL" id="LC484924">
    <property type="protein sequence ID" value="BBK61014.1"/>
    <property type="molecule type" value="Genomic_DNA"/>
</dbReference>
<dbReference type="PDB" id="7W5F">
    <property type="method" value="X-ray"/>
    <property type="resolution" value="2.53 A"/>
    <property type="chains" value="A/B=1-386"/>
</dbReference>
<dbReference type="PDB" id="7W5G">
    <property type="method" value="X-ray"/>
    <property type="resolution" value="1.80 A"/>
    <property type="chains" value="A=1-386"/>
</dbReference>
<dbReference type="PDB" id="7W5H">
    <property type="method" value="X-ray"/>
    <property type="resolution" value="2.05 A"/>
    <property type="chains" value="A/B=1-386"/>
</dbReference>
<dbReference type="PDB" id="7W5I">
    <property type="method" value="X-ray"/>
    <property type="resolution" value="2.13 A"/>
    <property type="chains" value="A/B=1-386"/>
</dbReference>
<dbReference type="PDB" id="7W5J">
    <property type="method" value="X-ray"/>
    <property type="resolution" value="2.05 A"/>
    <property type="chains" value="A/B=1-386"/>
</dbReference>
<dbReference type="PDBsum" id="7W5F"/>
<dbReference type="PDBsum" id="7W5G"/>
<dbReference type="PDBsum" id="7W5H"/>
<dbReference type="PDBsum" id="7W5I"/>
<dbReference type="PDBsum" id="7W5J"/>
<dbReference type="SMR" id="A0A5S9I252"/>
<dbReference type="GO" id="GO:0080016">
    <property type="term" value="F:(-)-E-beta-caryophyllene synthase activity"/>
    <property type="evidence" value="ECO:0007669"/>
    <property type="project" value="UniProtKB-EC"/>
</dbReference>
<dbReference type="GO" id="GO:0080017">
    <property type="term" value="F:alpha-humulene synthase activity"/>
    <property type="evidence" value="ECO:0007669"/>
    <property type="project" value="UniProtKB-EC"/>
</dbReference>
<dbReference type="GO" id="GO:0046872">
    <property type="term" value="F:metal ion binding"/>
    <property type="evidence" value="ECO:0007669"/>
    <property type="project" value="UniProtKB-KW"/>
</dbReference>
<dbReference type="GO" id="GO:0008299">
    <property type="term" value="P:isoprenoid biosynthetic process"/>
    <property type="evidence" value="ECO:0007669"/>
    <property type="project" value="UniProtKB-ARBA"/>
</dbReference>
<dbReference type="Gene3D" id="1.10.600.10">
    <property type="entry name" value="Farnesyl Diphosphate Synthase"/>
    <property type="match status" value="1"/>
</dbReference>
<dbReference type="InterPro" id="IPR008949">
    <property type="entry name" value="Isoprenoid_synthase_dom_sf"/>
</dbReference>
<dbReference type="InterPro" id="IPR034686">
    <property type="entry name" value="Terpene_cyclase-like_2"/>
</dbReference>
<dbReference type="PANTHER" id="PTHR35201:SF4">
    <property type="entry name" value="BETA-PINACENE SYNTHASE-RELATED"/>
    <property type="match status" value="1"/>
</dbReference>
<dbReference type="PANTHER" id="PTHR35201">
    <property type="entry name" value="TERPENE SYNTHASE"/>
    <property type="match status" value="1"/>
</dbReference>
<dbReference type="Pfam" id="PF19086">
    <property type="entry name" value="Terpene_syn_C_2"/>
    <property type="match status" value="1"/>
</dbReference>
<dbReference type="SFLD" id="SFLDS00005">
    <property type="entry name" value="Isoprenoid_Synthase_Type_I"/>
    <property type="match status" value="1"/>
</dbReference>
<dbReference type="SFLD" id="SFLDG01020">
    <property type="entry name" value="Terpene_Cyclase_Like_2"/>
    <property type="match status" value="1"/>
</dbReference>
<dbReference type="SUPFAM" id="SSF48576">
    <property type="entry name" value="Terpenoid synthases"/>
    <property type="match status" value="1"/>
</dbReference>
<name>TATC6_HYPAT</name>
<organism>
    <name type="scientific">Hypocrea atroviridis</name>
    <name type="common">Trichoderma atroviride</name>
    <dbReference type="NCBI Taxonomy" id="63577"/>
    <lineage>
        <taxon>Eukaryota</taxon>
        <taxon>Fungi</taxon>
        <taxon>Dikarya</taxon>
        <taxon>Ascomycota</taxon>
        <taxon>Pezizomycotina</taxon>
        <taxon>Sordariomycetes</taxon>
        <taxon>Hypocreomycetidae</taxon>
        <taxon>Hypocreales</taxon>
        <taxon>Hypocreaceae</taxon>
        <taxon>Trichoderma</taxon>
    </lineage>
</organism>